<evidence type="ECO:0000250" key="1"/>
<evidence type="ECO:0000269" key="2">
    <source>
    </source>
</evidence>
<evidence type="ECO:0000305" key="3"/>
<proteinExistence type="evidence at transcript level"/>
<gene>
    <name type="primary">nuoI</name>
</gene>
<dbReference type="EC" id="7.1.1.-"/>
<dbReference type="EMBL" id="AF281148">
    <property type="protein sequence ID" value="AAL89571.1"/>
    <property type="molecule type" value="Genomic_DNA"/>
</dbReference>
<dbReference type="RefSeq" id="WP_003180051.1">
    <property type="nucleotide sequence ID" value="NZ_SMCJ01000014.1"/>
</dbReference>
<dbReference type="SMR" id="Q8RQ74"/>
<dbReference type="GeneID" id="98112147"/>
<dbReference type="eggNOG" id="COG1143">
    <property type="taxonomic scope" value="Bacteria"/>
</dbReference>
<dbReference type="OrthoDB" id="9808559at2"/>
<dbReference type="GO" id="GO:0005886">
    <property type="term" value="C:plasma membrane"/>
    <property type="evidence" value="ECO:0007669"/>
    <property type="project" value="UniProtKB-SubCell"/>
</dbReference>
<dbReference type="GO" id="GO:0051539">
    <property type="term" value="F:4 iron, 4 sulfur cluster binding"/>
    <property type="evidence" value="ECO:0007669"/>
    <property type="project" value="UniProtKB-KW"/>
</dbReference>
<dbReference type="GO" id="GO:0005506">
    <property type="term" value="F:iron ion binding"/>
    <property type="evidence" value="ECO:0007669"/>
    <property type="project" value="UniProtKB-UniRule"/>
</dbReference>
<dbReference type="GO" id="GO:0050136">
    <property type="term" value="F:NADH:ubiquinone reductase (non-electrogenic) activity"/>
    <property type="evidence" value="ECO:0007669"/>
    <property type="project" value="UniProtKB-UniRule"/>
</dbReference>
<dbReference type="GO" id="GO:0048038">
    <property type="term" value="F:quinone binding"/>
    <property type="evidence" value="ECO:0007669"/>
    <property type="project" value="UniProtKB-KW"/>
</dbReference>
<dbReference type="GO" id="GO:0009060">
    <property type="term" value="P:aerobic respiration"/>
    <property type="evidence" value="ECO:0007669"/>
    <property type="project" value="TreeGrafter"/>
</dbReference>
<dbReference type="FunFam" id="3.30.70.3270:FF:000002">
    <property type="entry name" value="NADH-quinone oxidoreductase subunit I"/>
    <property type="match status" value="1"/>
</dbReference>
<dbReference type="Gene3D" id="3.30.70.3270">
    <property type="match status" value="1"/>
</dbReference>
<dbReference type="HAMAP" id="MF_01351">
    <property type="entry name" value="NDH1_NuoI"/>
    <property type="match status" value="1"/>
</dbReference>
<dbReference type="InterPro" id="IPR017896">
    <property type="entry name" value="4Fe4S_Fe-S-bd"/>
</dbReference>
<dbReference type="InterPro" id="IPR017900">
    <property type="entry name" value="4Fe4S_Fe_S_CS"/>
</dbReference>
<dbReference type="InterPro" id="IPR010226">
    <property type="entry name" value="NADH_quinone_OxRdtase_chainI"/>
</dbReference>
<dbReference type="NCBIfam" id="TIGR01971">
    <property type="entry name" value="NuoI"/>
    <property type="match status" value="1"/>
</dbReference>
<dbReference type="NCBIfam" id="NF004536">
    <property type="entry name" value="PRK05888.1-1"/>
    <property type="match status" value="1"/>
</dbReference>
<dbReference type="PANTHER" id="PTHR10849:SF20">
    <property type="entry name" value="NADH DEHYDROGENASE [UBIQUINONE] IRON-SULFUR PROTEIN 8, MITOCHONDRIAL"/>
    <property type="match status" value="1"/>
</dbReference>
<dbReference type="PANTHER" id="PTHR10849">
    <property type="entry name" value="NADH DEHYDROGENASE UBIQUINONE IRON-SULFUR PROTEIN 8, MITOCHONDRIAL"/>
    <property type="match status" value="1"/>
</dbReference>
<dbReference type="Pfam" id="PF12838">
    <property type="entry name" value="Fer4_7"/>
    <property type="match status" value="1"/>
</dbReference>
<dbReference type="SUPFAM" id="SSF54862">
    <property type="entry name" value="4Fe-4S ferredoxins"/>
    <property type="match status" value="1"/>
</dbReference>
<dbReference type="PROSITE" id="PS00198">
    <property type="entry name" value="4FE4S_FER_1"/>
    <property type="match status" value="2"/>
</dbReference>
<dbReference type="PROSITE" id="PS51379">
    <property type="entry name" value="4FE4S_FER_2"/>
    <property type="match status" value="2"/>
</dbReference>
<keyword id="KW-0004">4Fe-4S</keyword>
<keyword id="KW-0997">Cell inner membrane</keyword>
<keyword id="KW-1003">Cell membrane</keyword>
<keyword id="KW-0408">Iron</keyword>
<keyword id="KW-0411">Iron-sulfur</keyword>
<keyword id="KW-0472">Membrane</keyword>
<keyword id="KW-0479">Metal-binding</keyword>
<keyword id="KW-0520">NAD</keyword>
<keyword id="KW-0874">Quinone</keyword>
<keyword id="KW-0677">Repeat</keyword>
<keyword id="KW-1278">Translocase</keyword>
<keyword id="KW-0830">Ubiquinone</keyword>
<accession>Q8RQ74</accession>
<comment type="function">
    <text evidence="1 2">NDH-1 shuttles electrons from NADH, via FMN and iron-sulfur (Fe-S) centers, to quinones in the respiratory chain. The immediate electron acceptor for the enzyme in this species is believed to be ubiquinone. Couples the redox reaction to proton translocation (for every two electrons transferred, four hydrogen ions are translocated across the cytoplasmic membrane), and thus conserves the redox energy in a proton gradient (By similarity). Required for plants roots colonization.</text>
</comment>
<comment type="catalytic activity">
    <reaction>
        <text>a quinone + NADH + 5 H(+)(in) = a quinol + NAD(+) + 4 H(+)(out)</text>
        <dbReference type="Rhea" id="RHEA:57888"/>
        <dbReference type="ChEBI" id="CHEBI:15378"/>
        <dbReference type="ChEBI" id="CHEBI:24646"/>
        <dbReference type="ChEBI" id="CHEBI:57540"/>
        <dbReference type="ChEBI" id="CHEBI:57945"/>
        <dbReference type="ChEBI" id="CHEBI:132124"/>
    </reaction>
</comment>
<comment type="cofactor">
    <cofactor evidence="1">
        <name>[4Fe-4S] cluster</name>
        <dbReference type="ChEBI" id="CHEBI:49883"/>
    </cofactor>
    <text evidence="1">Binds 2 [4Fe-4S] clusters per subunit.</text>
</comment>
<comment type="subunit">
    <text evidence="1">NDH-1 is composed of 13 different subunits. Subunits NuoA, H, J, K, L, M, N constitute the membrane sector of the complex (By similarity).</text>
</comment>
<comment type="subcellular location">
    <subcellularLocation>
        <location evidence="3">Cell inner membrane</location>
        <topology evidence="3">Peripheral membrane protein</topology>
    </subcellularLocation>
</comment>
<comment type="induction">
    <text evidence="2">By low oxygen growth conditions, especially in rhizosphere.</text>
</comment>
<comment type="similarity">
    <text evidence="3">Belongs to the complex I 23 kDa subunit family.</text>
</comment>
<protein>
    <recommendedName>
        <fullName>NADH-quinone oxidoreductase subunit I</fullName>
        <ecNumber>7.1.1.-</ecNumber>
    </recommendedName>
    <alternativeName>
        <fullName>NADH dehydrogenase I subunit I</fullName>
    </alternativeName>
    <alternativeName>
        <fullName>NDH-1 subunit I</fullName>
    </alternativeName>
</protein>
<organism>
    <name type="scientific">Pseudomonas fluorescens</name>
    <dbReference type="NCBI Taxonomy" id="294"/>
    <lineage>
        <taxon>Bacteria</taxon>
        <taxon>Pseudomonadati</taxon>
        <taxon>Pseudomonadota</taxon>
        <taxon>Gammaproteobacteria</taxon>
        <taxon>Pseudomonadales</taxon>
        <taxon>Pseudomonadaceae</taxon>
        <taxon>Pseudomonas</taxon>
    </lineage>
</organism>
<feature type="chain" id="PRO_0000245729" description="NADH-quinone oxidoreductase subunit I">
    <location>
        <begin position="1"/>
        <end position="182"/>
    </location>
</feature>
<feature type="domain" description="4Fe-4S ferredoxin-type 1">
    <location>
        <begin position="52"/>
        <end position="82"/>
    </location>
</feature>
<feature type="domain" description="4Fe-4S ferredoxin-type 2">
    <location>
        <begin position="92"/>
        <end position="121"/>
    </location>
</feature>
<feature type="binding site" evidence="1">
    <location>
        <position position="62"/>
    </location>
    <ligand>
        <name>[4Fe-4S] cluster</name>
        <dbReference type="ChEBI" id="CHEBI:49883"/>
        <label>1</label>
    </ligand>
</feature>
<feature type="binding site" evidence="1">
    <location>
        <position position="65"/>
    </location>
    <ligand>
        <name>[4Fe-4S] cluster</name>
        <dbReference type="ChEBI" id="CHEBI:49883"/>
        <label>1</label>
    </ligand>
</feature>
<feature type="binding site" evidence="1">
    <location>
        <position position="68"/>
    </location>
    <ligand>
        <name>[4Fe-4S] cluster</name>
        <dbReference type="ChEBI" id="CHEBI:49883"/>
        <label>1</label>
    </ligand>
</feature>
<feature type="binding site" evidence="1">
    <location>
        <position position="72"/>
    </location>
    <ligand>
        <name>[4Fe-4S] cluster</name>
        <dbReference type="ChEBI" id="CHEBI:49883"/>
        <label>2</label>
    </ligand>
</feature>
<feature type="binding site" evidence="1">
    <location>
        <position position="101"/>
    </location>
    <ligand>
        <name>[4Fe-4S] cluster</name>
        <dbReference type="ChEBI" id="CHEBI:49883"/>
        <label>2</label>
    </ligand>
</feature>
<feature type="binding site" evidence="1">
    <location>
        <position position="104"/>
    </location>
    <ligand>
        <name>[4Fe-4S] cluster</name>
        <dbReference type="ChEBI" id="CHEBI:49883"/>
        <label>2</label>
    </ligand>
</feature>
<feature type="binding site" evidence="1">
    <location>
        <position position="107"/>
    </location>
    <ligand>
        <name>[4Fe-4S] cluster</name>
        <dbReference type="ChEBI" id="CHEBI:49883"/>
        <label>2</label>
    </ligand>
</feature>
<feature type="binding site" evidence="1">
    <location>
        <position position="111"/>
    </location>
    <ligand>
        <name>[4Fe-4S] cluster</name>
        <dbReference type="ChEBI" id="CHEBI:49883"/>
        <label>1</label>
    </ligand>
</feature>
<reference key="1">
    <citation type="journal article" date="2002" name="Mol. Plant Microbe Interact.">
        <title>Characterization of NADH dehydrogenases of Pseudomonas fluorescens WCS365 and their role in competitive root colonization.</title>
        <authorList>
            <person name="Camacho-Carvajal M.M."/>
            <person name="Wijfjes A.H.M."/>
            <person name="Mulders I.H.M."/>
            <person name="Lugtenberg B.J.J."/>
            <person name="Bloemberg G.V."/>
        </authorList>
    </citation>
    <scope>NUCLEOTIDE SEQUENCE [GENOMIC DNA]</scope>
    <scope>FUNCTION</scope>
    <scope>INDUCTION</scope>
    <source>
        <strain>WCS365</strain>
    </source>
</reference>
<sequence length="182" mass="20474">MFKYIGDIVKGTGTQLRSLVMIFGHGFRKRDTLQYPEEPVYLAPRYRGRIVLTRDPDGEERCVACNLCAVACPVGCISLQKAETEDGRWYPDFFRINFSRCIFCGLCEEACPTTAIQLTPDFEMAEFKRQDLVYEKEDLLISGPGKNPDYNFYRVAGMAIAGKPKGAAQNEAEPINVKSLLP</sequence>
<name>NUOI_PSEFL</name>